<comment type="function">
    <text evidence="1">DNA repair enzyme that has both DNA N-glycosylase activity and AP-lyase activity. The DNA N-glycosylase activity releases various damaged pyrimidines from DNA by cleaving the N-glycosidic bond, leaving an AP (apurinic/apyrimidinic) site. The AP-lyase activity cleaves the phosphodiester bond 3' to the AP site by a beta-elimination, leaving a 3'-terminal unsaturated sugar and a product with a terminal 5'-phosphate.</text>
</comment>
<comment type="catalytic activity">
    <reaction evidence="1">
        <text>2'-deoxyribonucleotide-(2'-deoxyribose 5'-phosphate)-2'-deoxyribonucleotide-DNA = a 3'-end 2'-deoxyribonucleotide-(2,3-dehydro-2,3-deoxyribose 5'-phosphate)-DNA + a 5'-end 5'-phospho-2'-deoxyribonucleoside-DNA + H(+)</text>
        <dbReference type="Rhea" id="RHEA:66592"/>
        <dbReference type="Rhea" id="RHEA-COMP:13180"/>
        <dbReference type="Rhea" id="RHEA-COMP:16897"/>
        <dbReference type="Rhea" id="RHEA-COMP:17067"/>
        <dbReference type="ChEBI" id="CHEBI:15378"/>
        <dbReference type="ChEBI" id="CHEBI:136412"/>
        <dbReference type="ChEBI" id="CHEBI:157695"/>
        <dbReference type="ChEBI" id="CHEBI:167181"/>
        <dbReference type="EC" id="4.2.99.18"/>
    </reaction>
</comment>
<comment type="cofactor">
    <cofactor evidence="1">
        <name>[4Fe-4S] cluster</name>
        <dbReference type="ChEBI" id="CHEBI:49883"/>
    </cofactor>
    <text evidence="1">Binds 1 [4Fe-4S] cluster.</text>
</comment>
<comment type="similarity">
    <text evidence="1">Belongs to the Nth/MutY family.</text>
</comment>
<evidence type="ECO:0000255" key="1">
    <source>
        <dbReference type="HAMAP-Rule" id="MF_00942"/>
    </source>
</evidence>
<reference key="1">
    <citation type="journal article" date="2003" name="Proc. Natl. Acad. Sci. U.S.A.">
        <title>Reductive genome evolution in Buchnera aphidicola.</title>
        <authorList>
            <person name="van Ham R.C.H.J."/>
            <person name="Kamerbeek J."/>
            <person name="Palacios C."/>
            <person name="Rausell C."/>
            <person name="Abascal F."/>
            <person name="Bastolla U."/>
            <person name="Fernandez J.M."/>
            <person name="Jimenez L."/>
            <person name="Postigo M."/>
            <person name="Silva F.J."/>
            <person name="Tamames J."/>
            <person name="Viguera E."/>
            <person name="Latorre A."/>
            <person name="Valencia A."/>
            <person name="Moran F."/>
            <person name="Moya A."/>
        </authorList>
    </citation>
    <scope>NUCLEOTIDE SEQUENCE [LARGE SCALE GENOMIC DNA]</scope>
    <source>
        <strain>Bp</strain>
    </source>
</reference>
<gene>
    <name evidence="1" type="primary">nth</name>
    <name type="ordered locus">bbp_114</name>
</gene>
<name>END3_BUCBP</name>
<feature type="chain" id="PRO_0000102216" description="Endonuclease III">
    <location>
        <begin position="1"/>
        <end position="215"/>
    </location>
</feature>
<feature type="domain" description="HhH" evidence="1">
    <location>
        <begin position="113"/>
        <end position="132"/>
    </location>
</feature>
<feature type="binding site" evidence="1">
    <location>
        <position position="192"/>
    </location>
    <ligand>
        <name>[4Fe-4S] cluster</name>
        <dbReference type="ChEBI" id="CHEBI:49883"/>
    </ligand>
</feature>
<feature type="binding site" evidence="1">
    <location>
        <position position="199"/>
    </location>
    <ligand>
        <name>[4Fe-4S] cluster</name>
        <dbReference type="ChEBI" id="CHEBI:49883"/>
    </ligand>
</feature>
<feature type="binding site" evidence="1">
    <location>
        <position position="202"/>
    </location>
    <ligand>
        <name>[4Fe-4S] cluster</name>
        <dbReference type="ChEBI" id="CHEBI:49883"/>
    </ligand>
</feature>
<feature type="binding site" evidence="1">
    <location>
        <position position="208"/>
    </location>
    <ligand>
        <name>[4Fe-4S] cluster</name>
        <dbReference type="ChEBI" id="CHEBI:49883"/>
    </ligand>
</feature>
<protein>
    <recommendedName>
        <fullName evidence="1">Endonuclease III</fullName>
        <ecNumber evidence="1">4.2.99.18</ecNumber>
    </recommendedName>
    <alternativeName>
        <fullName evidence="1">DNA-(apurinic or apyrimidinic site) lyase</fullName>
    </alternativeName>
</protein>
<accession>Q89AW4</accession>
<dbReference type="EC" id="4.2.99.18" evidence="1"/>
<dbReference type="EMBL" id="AE016826">
    <property type="protein sequence ID" value="AAO26848.1"/>
    <property type="molecule type" value="Genomic_DNA"/>
</dbReference>
<dbReference type="SMR" id="Q89AW4"/>
<dbReference type="STRING" id="224915.bbp_114"/>
<dbReference type="KEGG" id="bab:bbp_114"/>
<dbReference type="eggNOG" id="COG0177">
    <property type="taxonomic scope" value="Bacteria"/>
</dbReference>
<dbReference type="HOGENOM" id="CLU_012862_3_0_6"/>
<dbReference type="OrthoDB" id="9800977at2"/>
<dbReference type="Proteomes" id="UP000000601">
    <property type="component" value="Chromosome"/>
</dbReference>
<dbReference type="GO" id="GO:0051539">
    <property type="term" value="F:4 iron, 4 sulfur cluster binding"/>
    <property type="evidence" value="ECO:0007669"/>
    <property type="project" value="UniProtKB-UniRule"/>
</dbReference>
<dbReference type="GO" id="GO:0140078">
    <property type="term" value="F:class I DNA-(apurinic or apyrimidinic site) endonuclease activity"/>
    <property type="evidence" value="ECO:0007669"/>
    <property type="project" value="UniProtKB-EC"/>
</dbReference>
<dbReference type="GO" id="GO:0003677">
    <property type="term" value="F:DNA binding"/>
    <property type="evidence" value="ECO:0007669"/>
    <property type="project" value="UniProtKB-UniRule"/>
</dbReference>
<dbReference type="GO" id="GO:0019104">
    <property type="term" value="F:DNA N-glycosylase activity"/>
    <property type="evidence" value="ECO:0007669"/>
    <property type="project" value="UniProtKB-UniRule"/>
</dbReference>
<dbReference type="GO" id="GO:0046872">
    <property type="term" value="F:metal ion binding"/>
    <property type="evidence" value="ECO:0007669"/>
    <property type="project" value="UniProtKB-KW"/>
</dbReference>
<dbReference type="GO" id="GO:0006285">
    <property type="term" value="P:base-excision repair, AP site formation"/>
    <property type="evidence" value="ECO:0007669"/>
    <property type="project" value="TreeGrafter"/>
</dbReference>
<dbReference type="CDD" id="cd00056">
    <property type="entry name" value="ENDO3c"/>
    <property type="match status" value="1"/>
</dbReference>
<dbReference type="FunFam" id="1.10.1670.10:FF:000001">
    <property type="entry name" value="Endonuclease III"/>
    <property type="match status" value="1"/>
</dbReference>
<dbReference type="FunFam" id="1.10.340.30:FF:000001">
    <property type="entry name" value="Endonuclease III"/>
    <property type="match status" value="1"/>
</dbReference>
<dbReference type="Gene3D" id="1.10.1670.10">
    <property type="entry name" value="Helix-hairpin-Helix base-excision DNA repair enzymes (C-terminal)"/>
    <property type="match status" value="1"/>
</dbReference>
<dbReference type="Gene3D" id="1.10.340.30">
    <property type="entry name" value="Hypothetical protein, domain 2"/>
    <property type="match status" value="1"/>
</dbReference>
<dbReference type="HAMAP" id="MF_00942">
    <property type="entry name" value="Nth"/>
    <property type="match status" value="1"/>
</dbReference>
<dbReference type="InterPro" id="IPR011257">
    <property type="entry name" value="DNA_glycosylase"/>
</dbReference>
<dbReference type="InterPro" id="IPR004036">
    <property type="entry name" value="Endonuclease-III-like_CS2"/>
</dbReference>
<dbReference type="InterPro" id="IPR003651">
    <property type="entry name" value="Endonuclease3_FeS-loop_motif"/>
</dbReference>
<dbReference type="InterPro" id="IPR003265">
    <property type="entry name" value="HhH-GPD_domain"/>
</dbReference>
<dbReference type="InterPro" id="IPR023170">
    <property type="entry name" value="HhH_base_excis_C"/>
</dbReference>
<dbReference type="InterPro" id="IPR000445">
    <property type="entry name" value="HhH_motif"/>
</dbReference>
<dbReference type="InterPro" id="IPR003583">
    <property type="entry name" value="Hlx-hairpin-Hlx_DNA-bd_motif"/>
</dbReference>
<dbReference type="InterPro" id="IPR005759">
    <property type="entry name" value="Nth"/>
</dbReference>
<dbReference type="NCBIfam" id="TIGR01083">
    <property type="entry name" value="nth"/>
    <property type="match status" value="1"/>
</dbReference>
<dbReference type="PANTHER" id="PTHR10359">
    <property type="entry name" value="A/G-SPECIFIC ADENINE GLYCOSYLASE/ENDONUCLEASE III"/>
    <property type="match status" value="1"/>
</dbReference>
<dbReference type="PANTHER" id="PTHR10359:SF18">
    <property type="entry name" value="ENDONUCLEASE III"/>
    <property type="match status" value="1"/>
</dbReference>
<dbReference type="Pfam" id="PF00633">
    <property type="entry name" value="HHH"/>
    <property type="match status" value="1"/>
</dbReference>
<dbReference type="Pfam" id="PF00730">
    <property type="entry name" value="HhH-GPD"/>
    <property type="match status" value="1"/>
</dbReference>
<dbReference type="PIRSF" id="PIRSF001435">
    <property type="entry name" value="Nth"/>
    <property type="match status" value="1"/>
</dbReference>
<dbReference type="SMART" id="SM00478">
    <property type="entry name" value="ENDO3c"/>
    <property type="match status" value="1"/>
</dbReference>
<dbReference type="SMART" id="SM00525">
    <property type="entry name" value="FES"/>
    <property type="match status" value="1"/>
</dbReference>
<dbReference type="SMART" id="SM00278">
    <property type="entry name" value="HhH1"/>
    <property type="match status" value="1"/>
</dbReference>
<dbReference type="SUPFAM" id="SSF48150">
    <property type="entry name" value="DNA-glycosylase"/>
    <property type="match status" value="1"/>
</dbReference>
<dbReference type="PROSITE" id="PS01155">
    <property type="entry name" value="ENDONUCLEASE_III_2"/>
    <property type="match status" value="1"/>
</dbReference>
<organism>
    <name type="scientific">Buchnera aphidicola subsp. Baizongia pistaciae (strain Bp)</name>
    <dbReference type="NCBI Taxonomy" id="224915"/>
    <lineage>
        <taxon>Bacteria</taxon>
        <taxon>Pseudomonadati</taxon>
        <taxon>Pseudomonadota</taxon>
        <taxon>Gammaproteobacteria</taxon>
        <taxon>Enterobacterales</taxon>
        <taxon>Erwiniaceae</taxon>
        <taxon>Buchnera</taxon>
    </lineage>
</organism>
<proteinExistence type="inferred from homology"/>
<sequence>MEIKKLNHKNRYKILKMFSNIYINFKTGLVFTSNFELLISVMLSAQTTDRMVNKTTQRLFGIANTPSGFISIGLHAIRENIRKLGLYNKKSSNILRTCEILLKRYGGKVPNNREDLESLPGVGRKTANVILNVIFKKKTIAVDTHVFRLCNRIGFAKGTTVLTVEKKLLNIVPEKFKLNFHAWFIMHGRYICTSRVPKCSKCIISSLCEFKDKNI</sequence>
<keyword id="KW-0004">4Fe-4S</keyword>
<keyword id="KW-0227">DNA damage</keyword>
<keyword id="KW-0234">DNA repair</keyword>
<keyword id="KW-0238">DNA-binding</keyword>
<keyword id="KW-0326">Glycosidase</keyword>
<keyword id="KW-0378">Hydrolase</keyword>
<keyword id="KW-0408">Iron</keyword>
<keyword id="KW-0411">Iron-sulfur</keyword>
<keyword id="KW-0456">Lyase</keyword>
<keyword id="KW-0479">Metal-binding</keyword>
<keyword id="KW-1185">Reference proteome</keyword>